<dbReference type="EC" id="3.2.1.-"/>
<dbReference type="EMBL" id="AAFI02000012">
    <property type="protein sequence ID" value="EAL70009.1"/>
    <property type="molecule type" value="Genomic_DNA"/>
</dbReference>
<dbReference type="SMR" id="Q8T293"/>
<dbReference type="FunCoup" id="Q8T293">
    <property type="interactions" value="1"/>
</dbReference>
<dbReference type="STRING" id="44689.Q8T293"/>
<dbReference type="CAZy" id="GH18">
    <property type="family name" value="Glycoside Hydrolase Family 18"/>
</dbReference>
<dbReference type="GlyCosmos" id="Q8T293">
    <property type="glycosylation" value="5 sites, No reported glycans"/>
</dbReference>
<dbReference type="GlyGen" id="Q8T293">
    <property type="glycosylation" value="5 sites"/>
</dbReference>
<dbReference type="PaxDb" id="44689-DDB0238379"/>
<dbReference type="EnsemblProtists" id="EAL70009">
    <property type="protein sequence ID" value="EAL70009"/>
    <property type="gene ID" value="DDB_G0274233"/>
</dbReference>
<dbReference type="KEGG" id="ddi:DDB_G0274233"/>
<dbReference type="dictyBase" id="DDB_G0274233">
    <property type="gene designation" value="ctbsA"/>
</dbReference>
<dbReference type="VEuPathDB" id="AmoebaDB:DDB_G0274233"/>
<dbReference type="eggNOG" id="KOG2806">
    <property type="taxonomic scope" value="Eukaryota"/>
</dbReference>
<dbReference type="HOGENOM" id="CLU_061189_1_0_1"/>
<dbReference type="InParanoid" id="Q8T293"/>
<dbReference type="OMA" id="KWIMKQV"/>
<dbReference type="PhylomeDB" id="Q8T293"/>
<dbReference type="PRO" id="PR:Q8T293"/>
<dbReference type="Proteomes" id="UP000002195">
    <property type="component" value="Chromosome 2"/>
</dbReference>
<dbReference type="GO" id="GO:0005764">
    <property type="term" value="C:lysosome"/>
    <property type="evidence" value="ECO:0007669"/>
    <property type="project" value="UniProtKB-SubCell"/>
</dbReference>
<dbReference type="GO" id="GO:0008061">
    <property type="term" value="F:chitin binding"/>
    <property type="evidence" value="ECO:0007669"/>
    <property type="project" value="InterPro"/>
</dbReference>
<dbReference type="GO" id="GO:0016798">
    <property type="term" value="F:hydrolase activity, acting on glycosyl bonds"/>
    <property type="evidence" value="ECO:0007669"/>
    <property type="project" value="UniProtKB-KW"/>
</dbReference>
<dbReference type="GO" id="GO:0009313">
    <property type="term" value="P:oligosaccharide catabolic process"/>
    <property type="evidence" value="ECO:0000318"/>
    <property type="project" value="GO_Central"/>
</dbReference>
<dbReference type="CDD" id="cd02875">
    <property type="entry name" value="GH18_chitobiase"/>
    <property type="match status" value="1"/>
</dbReference>
<dbReference type="FunFam" id="3.10.50.10:FF:000006">
    <property type="entry name" value="Chitobiase, di-N-acetyl"/>
    <property type="match status" value="1"/>
</dbReference>
<dbReference type="FunFam" id="3.20.20.80:FF:000250">
    <property type="entry name" value="Probable di-N-acetylchitobiase 1"/>
    <property type="match status" value="1"/>
</dbReference>
<dbReference type="Gene3D" id="3.10.50.10">
    <property type="match status" value="1"/>
</dbReference>
<dbReference type="Gene3D" id="3.20.20.80">
    <property type="entry name" value="Glycosidases"/>
    <property type="match status" value="1"/>
</dbReference>
<dbReference type="InterPro" id="IPR011583">
    <property type="entry name" value="Chitinase_II/V-like_cat"/>
</dbReference>
<dbReference type="InterPro" id="IPR029070">
    <property type="entry name" value="Chitinase_insertion_sf"/>
</dbReference>
<dbReference type="InterPro" id="IPR047898">
    <property type="entry name" value="DIAC_cat"/>
</dbReference>
<dbReference type="InterPro" id="IPR051887">
    <property type="entry name" value="GH18_Domain-Containing"/>
</dbReference>
<dbReference type="InterPro" id="IPR001223">
    <property type="entry name" value="Glyco_hydro18_cat"/>
</dbReference>
<dbReference type="InterPro" id="IPR017853">
    <property type="entry name" value="Glycoside_hydrolase_SF"/>
</dbReference>
<dbReference type="PANTHER" id="PTHR46290">
    <property type="entry name" value="DI-N-ACETYLCHITOBIASE"/>
    <property type="match status" value="1"/>
</dbReference>
<dbReference type="PANTHER" id="PTHR46290:SF1">
    <property type="entry name" value="DI-N-ACETYLCHITOBIASE"/>
    <property type="match status" value="1"/>
</dbReference>
<dbReference type="Pfam" id="PF00704">
    <property type="entry name" value="Glyco_hydro_18"/>
    <property type="match status" value="1"/>
</dbReference>
<dbReference type="SMART" id="SM00636">
    <property type="entry name" value="Glyco_18"/>
    <property type="match status" value="1"/>
</dbReference>
<dbReference type="SUPFAM" id="SSF51445">
    <property type="entry name" value="(Trans)glycosidases"/>
    <property type="match status" value="1"/>
</dbReference>
<dbReference type="PROSITE" id="PS51910">
    <property type="entry name" value="GH18_2"/>
    <property type="match status" value="1"/>
</dbReference>
<proteinExistence type="inferred from homology"/>
<protein>
    <recommendedName>
        <fullName>Probable di-N-acetylchitobiase 2</fullName>
        <ecNumber>3.2.1.-</ecNumber>
    </recommendedName>
</protein>
<evidence type="ECO:0000250" key="1"/>
<evidence type="ECO:0000255" key="2"/>
<evidence type="ECO:0000255" key="3">
    <source>
        <dbReference type="PROSITE-ProRule" id="PRU01258"/>
    </source>
</evidence>
<evidence type="ECO:0000305" key="4"/>
<reference key="1">
    <citation type="journal article" date="2002" name="Nature">
        <title>Sequence and analysis of chromosome 2 of Dictyostelium discoideum.</title>
        <authorList>
            <person name="Gloeckner G."/>
            <person name="Eichinger L."/>
            <person name="Szafranski K."/>
            <person name="Pachebat J.A."/>
            <person name="Bankier A.T."/>
            <person name="Dear P.H."/>
            <person name="Lehmann R."/>
            <person name="Baumgart C."/>
            <person name="Parra G."/>
            <person name="Abril J.F."/>
            <person name="Guigo R."/>
            <person name="Kumpf K."/>
            <person name="Tunggal B."/>
            <person name="Cox E.C."/>
            <person name="Quail M.A."/>
            <person name="Platzer M."/>
            <person name="Rosenthal A."/>
            <person name="Noegel A.A."/>
        </authorList>
    </citation>
    <scope>NUCLEOTIDE SEQUENCE [LARGE SCALE GENOMIC DNA]</scope>
    <source>
        <strain>AX4</strain>
    </source>
</reference>
<reference key="2">
    <citation type="journal article" date="2005" name="Nature">
        <title>The genome of the social amoeba Dictyostelium discoideum.</title>
        <authorList>
            <person name="Eichinger L."/>
            <person name="Pachebat J.A."/>
            <person name="Gloeckner G."/>
            <person name="Rajandream M.A."/>
            <person name="Sucgang R."/>
            <person name="Berriman M."/>
            <person name="Song J."/>
            <person name="Olsen R."/>
            <person name="Szafranski K."/>
            <person name="Xu Q."/>
            <person name="Tunggal B."/>
            <person name="Kummerfeld S."/>
            <person name="Madera M."/>
            <person name="Konfortov B.A."/>
            <person name="Rivero F."/>
            <person name="Bankier A.T."/>
            <person name="Lehmann R."/>
            <person name="Hamlin N."/>
            <person name="Davies R."/>
            <person name="Gaudet P."/>
            <person name="Fey P."/>
            <person name="Pilcher K."/>
            <person name="Chen G."/>
            <person name="Saunders D."/>
            <person name="Sodergren E.J."/>
            <person name="Davis P."/>
            <person name="Kerhornou A."/>
            <person name="Nie X."/>
            <person name="Hall N."/>
            <person name="Anjard C."/>
            <person name="Hemphill L."/>
            <person name="Bason N."/>
            <person name="Farbrother P."/>
            <person name="Desany B."/>
            <person name="Just E."/>
            <person name="Morio T."/>
            <person name="Rost R."/>
            <person name="Churcher C.M."/>
            <person name="Cooper J."/>
            <person name="Haydock S."/>
            <person name="van Driessche N."/>
            <person name="Cronin A."/>
            <person name="Goodhead I."/>
            <person name="Muzny D.M."/>
            <person name="Mourier T."/>
            <person name="Pain A."/>
            <person name="Lu M."/>
            <person name="Harper D."/>
            <person name="Lindsay R."/>
            <person name="Hauser H."/>
            <person name="James K.D."/>
            <person name="Quiles M."/>
            <person name="Madan Babu M."/>
            <person name="Saito T."/>
            <person name="Buchrieser C."/>
            <person name="Wardroper A."/>
            <person name="Felder M."/>
            <person name="Thangavelu M."/>
            <person name="Johnson D."/>
            <person name="Knights A."/>
            <person name="Loulseged H."/>
            <person name="Mungall K.L."/>
            <person name="Oliver K."/>
            <person name="Price C."/>
            <person name="Quail M.A."/>
            <person name="Urushihara H."/>
            <person name="Hernandez J."/>
            <person name="Rabbinowitsch E."/>
            <person name="Steffen D."/>
            <person name="Sanders M."/>
            <person name="Ma J."/>
            <person name="Kohara Y."/>
            <person name="Sharp S."/>
            <person name="Simmonds M.N."/>
            <person name="Spiegler S."/>
            <person name="Tivey A."/>
            <person name="Sugano S."/>
            <person name="White B."/>
            <person name="Walker D."/>
            <person name="Woodward J.R."/>
            <person name="Winckler T."/>
            <person name="Tanaka Y."/>
            <person name="Shaulsky G."/>
            <person name="Schleicher M."/>
            <person name="Weinstock G.M."/>
            <person name="Rosenthal A."/>
            <person name="Cox E.C."/>
            <person name="Chisholm R.L."/>
            <person name="Gibbs R.A."/>
            <person name="Loomis W.F."/>
            <person name="Platzer M."/>
            <person name="Kay R.R."/>
            <person name="Williams J.G."/>
            <person name="Dear P.H."/>
            <person name="Noegel A.A."/>
            <person name="Barrell B.G."/>
            <person name="Kuspa A."/>
        </authorList>
    </citation>
    <scope>NUCLEOTIDE SEQUENCE [LARGE SCALE GENOMIC DNA]</scope>
    <source>
        <strain>AX4</strain>
    </source>
</reference>
<feature type="signal peptide" evidence="2">
    <location>
        <begin position="1"/>
        <end position="15"/>
    </location>
</feature>
<feature type="chain" id="PRO_0000328003" description="Probable di-N-acetylchitobiase 2">
    <location>
        <begin position="16"/>
        <end position="385"/>
    </location>
</feature>
<feature type="domain" description="GH18" evidence="3">
    <location>
        <begin position="16"/>
        <end position="377"/>
    </location>
</feature>
<feature type="active site" description="Proton donor" evidence="3">
    <location>
        <position position="129"/>
    </location>
</feature>
<feature type="glycosylation site" description="N-linked (GlcNAc...) asparagine" evidence="2">
    <location>
        <position position="51"/>
    </location>
</feature>
<feature type="glycosylation site" description="N-linked (GlcNAc...) asparagine" evidence="2">
    <location>
        <position position="101"/>
    </location>
</feature>
<feature type="glycosylation site" description="N-linked (GlcNAc...) asparagine" evidence="2">
    <location>
        <position position="223"/>
    </location>
</feature>
<feature type="glycosylation site" description="N-linked (GlcNAc...) asparagine" evidence="2">
    <location>
        <position position="272"/>
    </location>
</feature>
<feature type="glycosylation site" description="N-linked (GlcNAc...) asparagine" evidence="2">
    <location>
        <position position="296"/>
    </location>
</feature>
<organism>
    <name type="scientific">Dictyostelium discoideum</name>
    <name type="common">Social amoeba</name>
    <dbReference type="NCBI Taxonomy" id="44689"/>
    <lineage>
        <taxon>Eukaryota</taxon>
        <taxon>Amoebozoa</taxon>
        <taxon>Evosea</taxon>
        <taxon>Eumycetozoa</taxon>
        <taxon>Dictyostelia</taxon>
        <taxon>Dictyosteliales</taxon>
        <taxon>Dictyosteliaceae</taxon>
        <taxon>Dictyostelium</taxon>
    </lineage>
</organism>
<keyword id="KW-0325">Glycoprotein</keyword>
<keyword id="KW-0326">Glycosidase</keyword>
<keyword id="KW-0378">Hydrolase</keyword>
<keyword id="KW-0458">Lysosome</keyword>
<keyword id="KW-1185">Reference proteome</keyword>
<keyword id="KW-0732">Signal</keyword>
<sequence length="385" mass="43203">MRIILLLFLIVFVVAQSSSSSSSSGCPCDSSYLCEPLQIAPRQEFLGFSLNSTQYPNYYWNQLTTLAIFYETIEDELLCIAHENDVRLVWGTTFPIENLGNSSYIEEWIQEQIEKVQSTFTDGLNFDVESPITDPTIAQQYTELVSATNKAFKAINPFYQISIDVAWSPSCIDKRCYDYAGLASNSDFLVAMDYDERSQVFGEKVCTAGANSSPSNALAGINNFTDLGISTDQLVMGLPWYGYIYKNCLNGDEAGLETVVCQIESVPFRGANCSDAAGSEYDYSYLVQLLQDQTINSSAVQWNTEWQSPYFNYIDPITGNVDQVWFDNPQSLSIKVQLAQKLNLRGVAVWNIDFLDFSDQYNSRPMWDALASFFPQSASSEQSLN</sequence>
<name>DIAC2_DICDI</name>
<comment type="function">
    <text evidence="1">Involved in the degradation of asparagine-linked glycoproteins. May hydrolyze of N-acetyl-beta-D-glucosamine (1-4)N-acetylglucosamine chitobiose core from the reducing end of the bond.</text>
</comment>
<comment type="subcellular location">
    <subcellularLocation>
        <location evidence="1">Lysosome</location>
    </subcellularLocation>
</comment>
<comment type="similarity">
    <text evidence="4">Belongs to the glycosyl hydrolase 18 family.</text>
</comment>
<gene>
    <name type="primary">ctbs2</name>
    <name type="ORF">DDB_G0274233</name>
</gene>
<accession>Q8T293</accession>
<accession>Q554T5</accession>